<comment type="function">
    <text evidence="1">Catalyzes the hydrolysis of the adenine ring of phosphoribosyl-AMP.</text>
</comment>
<comment type="catalytic activity">
    <reaction evidence="1">
        <text>1-(5-phospho-beta-D-ribosyl)-5'-AMP + H2O = 1-(5-phospho-beta-D-ribosyl)-5-[(5-phospho-beta-D-ribosylamino)methylideneamino]imidazole-4-carboxamide</text>
        <dbReference type="Rhea" id="RHEA:20049"/>
        <dbReference type="ChEBI" id="CHEBI:15377"/>
        <dbReference type="ChEBI" id="CHEBI:58435"/>
        <dbReference type="ChEBI" id="CHEBI:59457"/>
        <dbReference type="EC" id="3.5.4.19"/>
    </reaction>
</comment>
<comment type="cofactor">
    <cofactor evidence="1">
        <name>Mg(2+)</name>
        <dbReference type="ChEBI" id="CHEBI:18420"/>
    </cofactor>
    <text evidence="1">Binds 1 Mg(2+) ion per subunit.</text>
</comment>
<comment type="cofactor">
    <cofactor evidence="1">
        <name>Zn(2+)</name>
        <dbReference type="ChEBI" id="CHEBI:29105"/>
    </cofactor>
    <text evidence="1">Binds 1 zinc ion per subunit.</text>
</comment>
<comment type="pathway">
    <text evidence="1">Amino-acid biosynthesis; L-histidine biosynthesis; L-histidine from 5-phospho-alpha-D-ribose 1-diphosphate: step 3/9.</text>
</comment>
<comment type="subunit">
    <text evidence="1">Homodimer.</text>
</comment>
<comment type="subcellular location">
    <subcellularLocation>
        <location evidence="1">Cytoplasm</location>
    </subcellularLocation>
</comment>
<comment type="similarity">
    <text evidence="1">Belongs to the PRA-CH family.</text>
</comment>
<dbReference type="EC" id="3.5.4.19" evidence="1"/>
<dbReference type="EMBL" id="AE014295">
    <property type="protein sequence ID" value="AAN24506.1"/>
    <property type="molecule type" value="Genomic_DNA"/>
</dbReference>
<dbReference type="RefSeq" id="NP_695870.1">
    <property type="nucleotide sequence ID" value="NC_004307.2"/>
</dbReference>
<dbReference type="RefSeq" id="WP_007052762.1">
    <property type="nucleotide sequence ID" value="NC_004307.2"/>
</dbReference>
<dbReference type="SMR" id="Q8G6F6"/>
<dbReference type="STRING" id="206672.BL0686"/>
<dbReference type="EnsemblBacteria" id="AAN24506">
    <property type="protein sequence ID" value="AAN24506"/>
    <property type="gene ID" value="BL0686"/>
</dbReference>
<dbReference type="GeneID" id="69578349"/>
<dbReference type="KEGG" id="blo:BL0686"/>
<dbReference type="PATRIC" id="fig|206672.9.peg.384"/>
<dbReference type="HOGENOM" id="CLU_048577_5_1_11"/>
<dbReference type="OrthoDB" id="9795769at2"/>
<dbReference type="PhylomeDB" id="Q8G6F6"/>
<dbReference type="UniPathway" id="UPA00031">
    <property type="reaction ID" value="UER00008"/>
</dbReference>
<dbReference type="Proteomes" id="UP000000439">
    <property type="component" value="Chromosome"/>
</dbReference>
<dbReference type="GO" id="GO:0005737">
    <property type="term" value="C:cytoplasm"/>
    <property type="evidence" value="ECO:0007669"/>
    <property type="project" value="UniProtKB-SubCell"/>
</dbReference>
<dbReference type="GO" id="GO:0000287">
    <property type="term" value="F:magnesium ion binding"/>
    <property type="evidence" value="ECO:0007669"/>
    <property type="project" value="UniProtKB-UniRule"/>
</dbReference>
<dbReference type="GO" id="GO:0004635">
    <property type="term" value="F:phosphoribosyl-AMP cyclohydrolase activity"/>
    <property type="evidence" value="ECO:0007669"/>
    <property type="project" value="UniProtKB-UniRule"/>
</dbReference>
<dbReference type="GO" id="GO:0008270">
    <property type="term" value="F:zinc ion binding"/>
    <property type="evidence" value="ECO:0007669"/>
    <property type="project" value="UniProtKB-UniRule"/>
</dbReference>
<dbReference type="GO" id="GO:0000105">
    <property type="term" value="P:L-histidine biosynthetic process"/>
    <property type="evidence" value="ECO:0007669"/>
    <property type="project" value="UniProtKB-UniRule"/>
</dbReference>
<dbReference type="FunFam" id="3.10.20.810:FF:000001">
    <property type="entry name" value="Histidine biosynthesis bifunctional protein HisIE"/>
    <property type="match status" value="1"/>
</dbReference>
<dbReference type="Gene3D" id="3.10.20.810">
    <property type="entry name" value="Phosphoribosyl-AMP cyclohydrolase"/>
    <property type="match status" value="1"/>
</dbReference>
<dbReference type="HAMAP" id="MF_01021">
    <property type="entry name" value="HisI"/>
    <property type="match status" value="1"/>
</dbReference>
<dbReference type="InterPro" id="IPR026660">
    <property type="entry name" value="PRA-CH"/>
</dbReference>
<dbReference type="InterPro" id="IPR002496">
    <property type="entry name" value="PRib_AMP_CycHydrolase_dom"/>
</dbReference>
<dbReference type="InterPro" id="IPR038019">
    <property type="entry name" value="PRib_AMP_CycHydrolase_sf"/>
</dbReference>
<dbReference type="NCBIfam" id="NF000768">
    <property type="entry name" value="PRK00051.1"/>
    <property type="match status" value="1"/>
</dbReference>
<dbReference type="PANTHER" id="PTHR42945">
    <property type="entry name" value="HISTIDINE BIOSYNTHESIS BIFUNCTIONAL PROTEIN"/>
    <property type="match status" value="1"/>
</dbReference>
<dbReference type="PANTHER" id="PTHR42945:SF11">
    <property type="entry name" value="PHOSPHORIBOSYL-AMP CYCLOHYDROLASE"/>
    <property type="match status" value="1"/>
</dbReference>
<dbReference type="Pfam" id="PF01502">
    <property type="entry name" value="PRA-CH"/>
    <property type="match status" value="1"/>
</dbReference>
<dbReference type="SUPFAM" id="SSF141734">
    <property type="entry name" value="HisI-like"/>
    <property type="match status" value="1"/>
</dbReference>
<proteinExistence type="inferred from homology"/>
<keyword id="KW-0028">Amino-acid biosynthesis</keyword>
<keyword id="KW-0963">Cytoplasm</keyword>
<keyword id="KW-0368">Histidine biosynthesis</keyword>
<keyword id="KW-0378">Hydrolase</keyword>
<keyword id="KW-0460">Magnesium</keyword>
<keyword id="KW-0479">Metal-binding</keyword>
<keyword id="KW-1185">Reference proteome</keyword>
<keyword id="KW-0862">Zinc</keyword>
<sequence length="131" mass="14604">MTDTTYDNSTELDPRIAARLKRDAKGLVAAVIQQYDTREVLMVGYMNDEALRRTLTTGRVTFWSRSRQEYWRKGDTSGHVQYVKGVSLDCDGDALLVEVDQVGAACHTGKRSCFLEGGPLPVVEGHRPAEQ</sequence>
<accession>Q8G6F6</accession>
<reference key="1">
    <citation type="journal article" date="2002" name="Proc. Natl. Acad. Sci. U.S.A.">
        <title>The genome sequence of Bifidobacterium longum reflects its adaptation to the human gastrointestinal tract.</title>
        <authorList>
            <person name="Schell M.A."/>
            <person name="Karmirantzou M."/>
            <person name="Snel B."/>
            <person name="Vilanova D."/>
            <person name="Berger B."/>
            <person name="Pessi G."/>
            <person name="Zwahlen M.-C."/>
            <person name="Desiere F."/>
            <person name="Bork P."/>
            <person name="Delley M."/>
            <person name="Pridmore R.D."/>
            <person name="Arigoni F."/>
        </authorList>
    </citation>
    <scope>NUCLEOTIDE SEQUENCE [LARGE SCALE GENOMIC DNA]</scope>
    <source>
        <strain>NCC 2705</strain>
    </source>
</reference>
<feature type="chain" id="PRO_0000136461" description="Phosphoribosyl-AMP cyclohydrolase">
    <location>
        <begin position="1"/>
        <end position="131"/>
    </location>
</feature>
<feature type="binding site" evidence="1">
    <location>
        <position position="89"/>
    </location>
    <ligand>
        <name>Mg(2+)</name>
        <dbReference type="ChEBI" id="CHEBI:18420"/>
    </ligand>
</feature>
<feature type="binding site" evidence="1">
    <location>
        <position position="90"/>
    </location>
    <ligand>
        <name>Zn(2+)</name>
        <dbReference type="ChEBI" id="CHEBI:29105"/>
        <note>ligand shared between dimeric partners</note>
    </ligand>
</feature>
<feature type="binding site" evidence="1">
    <location>
        <position position="91"/>
    </location>
    <ligand>
        <name>Mg(2+)</name>
        <dbReference type="ChEBI" id="CHEBI:18420"/>
    </ligand>
</feature>
<feature type="binding site" evidence="1">
    <location>
        <position position="93"/>
    </location>
    <ligand>
        <name>Mg(2+)</name>
        <dbReference type="ChEBI" id="CHEBI:18420"/>
    </ligand>
</feature>
<feature type="binding site" evidence="1">
    <location>
        <position position="106"/>
    </location>
    <ligand>
        <name>Zn(2+)</name>
        <dbReference type="ChEBI" id="CHEBI:29105"/>
        <note>ligand shared between dimeric partners</note>
    </ligand>
</feature>
<feature type="binding site" evidence="1">
    <location>
        <position position="113"/>
    </location>
    <ligand>
        <name>Zn(2+)</name>
        <dbReference type="ChEBI" id="CHEBI:29105"/>
        <note>ligand shared between dimeric partners</note>
    </ligand>
</feature>
<organism>
    <name type="scientific">Bifidobacterium longum (strain NCC 2705)</name>
    <dbReference type="NCBI Taxonomy" id="206672"/>
    <lineage>
        <taxon>Bacteria</taxon>
        <taxon>Bacillati</taxon>
        <taxon>Actinomycetota</taxon>
        <taxon>Actinomycetes</taxon>
        <taxon>Bifidobacteriales</taxon>
        <taxon>Bifidobacteriaceae</taxon>
        <taxon>Bifidobacterium</taxon>
    </lineage>
</organism>
<evidence type="ECO:0000255" key="1">
    <source>
        <dbReference type="HAMAP-Rule" id="MF_01021"/>
    </source>
</evidence>
<name>HIS3_BIFLO</name>
<gene>
    <name evidence="1" type="primary">hisI</name>
    <name type="ordered locus">BL0686</name>
</gene>
<protein>
    <recommendedName>
        <fullName evidence="1">Phosphoribosyl-AMP cyclohydrolase</fullName>
        <shortName evidence="1">PRA-CH</shortName>
        <ecNumber evidence="1">3.5.4.19</ecNumber>
    </recommendedName>
</protein>